<reference key="1">
    <citation type="submission" date="2008-06" db="EMBL/GenBank/DDBJ databases">
        <title>Complete sequence of Stenotrophomonas maltophilia R551-3.</title>
        <authorList>
            <consortium name="US DOE Joint Genome Institute"/>
            <person name="Lucas S."/>
            <person name="Copeland A."/>
            <person name="Lapidus A."/>
            <person name="Glavina del Rio T."/>
            <person name="Dalin E."/>
            <person name="Tice H."/>
            <person name="Pitluck S."/>
            <person name="Chain P."/>
            <person name="Malfatti S."/>
            <person name="Shin M."/>
            <person name="Vergez L."/>
            <person name="Lang D."/>
            <person name="Schmutz J."/>
            <person name="Larimer F."/>
            <person name="Land M."/>
            <person name="Hauser L."/>
            <person name="Kyrpides N."/>
            <person name="Mikhailova N."/>
            <person name="Taghavi S."/>
            <person name="Monchy S."/>
            <person name="Newman L."/>
            <person name="Vangronsveld J."/>
            <person name="van der Lelie D."/>
            <person name="Richardson P."/>
        </authorList>
    </citation>
    <scope>NUCLEOTIDE SEQUENCE [LARGE SCALE GENOMIC DNA]</scope>
    <source>
        <strain>R551-3</strain>
    </source>
</reference>
<proteinExistence type="inferred from homology"/>
<sequence>MFQGETAITVDDKGRMAVPTAYRDLVARASNNRLVLTYNPFEAGCLWLYAESEWERVRDDVMSKPNTQRVVRLLQQKLVGSAAHLELDGNGRISIPASHRGAVGIEKKAVLLGMGDKFELWSEQAHRALIQQTLSDEDLGDGLLDLKL</sequence>
<dbReference type="EMBL" id="CP001111">
    <property type="protein sequence ID" value="ACF50299.1"/>
    <property type="molecule type" value="Genomic_DNA"/>
</dbReference>
<dbReference type="RefSeq" id="WP_004143635.1">
    <property type="nucleotide sequence ID" value="NC_011071.1"/>
</dbReference>
<dbReference type="SMR" id="B4SJW7"/>
<dbReference type="STRING" id="391008.Smal_0594"/>
<dbReference type="GeneID" id="97259784"/>
<dbReference type="KEGG" id="smt:Smal_0594"/>
<dbReference type="eggNOG" id="COG2001">
    <property type="taxonomic scope" value="Bacteria"/>
</dbReference>
<dbReference type="HOGENOM" id="CLU_107907_2_0_6"/>
<dbReference type="OrthoDB" id="9807753at2"/>
<dbReference type="Proteomes" id="UP000001867">
    <property type="component" value="Chromosome"/>
</dbReference>
<dbReference type="GO" id="GO:0005737">
    <property type="term" value="C:cytoplasm"/>
    <property type="evidence" value="ECO:0007669"/>
    <property type="project" value="UniProtKB-UniRule"/>
</dbReference>
<dbReference type="GO" id="GO:0009295">
    <property type="term" value="C:nucleoid"/>
    <property type="evidence" value="ECO:0007669"/>
    <property type="project" value="UniProtKB-SubCell"/>
</dbReference>
<dbReference type="GO" id="GO:0003700">
    <property type="term" value="F:DNA-binding transcription factor activity"/>
    <property type="evidence" value="ECO:0007669"/>
    <property type="project" value="UniProtKB-UniRule"/>
</dbReference>
<dbReference type="GO" id="GO:0000976">
    <property type="term" value="F:transcription cis-regulatory region binding"/>
    <property type="evidence" value="ECO:0007669"/>
    <property type="project" value="TreeGrafter"/>
</dbReference>
<dbReference type="GO" id="GO:2000143">
    <property type="term" value="P:negative regulation of DNA-templated transcription initiation"/>
    <property type="evidence" value="ECO:0007669"/>
    <property type="project" value="TreeGrafter"/>
</dbReference>
<dbReference type="CDD" id="cd16321">
    <property type="entry name" value="MraZ_C"/>
    <property type="match status" value="1"/>
</dbReference>
<dbReference type="CDD" id="cd16320">
    <property type="entry name" value="MraZ_N"/>
    <property type="match status" value="1"/>
</dbReference>
<dbReference type="FunFam" id="3.40.1550.20:FF:000003">
    <property type="entry name" value="Transcriptional regulator MraZ"/>
    <property type="match status" value="1"/>
</dbReference>
<dbReference type="Gene3D" id="3.40.1550.20">
    <property type="entry name" value="Transcriptional regulator MraZ domain"/>
    <property type="match status" value="1"/>
</dbReference>
<dbReference type="HAMAP" id="MF_01008">
    <property type="entry name" value="MraZ"/>
    <property type="match status" value="1"/>
</dbReference>
<dbReference type="InterPro" id="IPR003444">
    <property type="entry name" value="MraZ"/>
</dbReference>
<dbReference type="InterPro" id="IPR035644">
    <property type="entry name" value="MraZ_C"/>
</dbReference>
<dbReference type="InterPro" id="IPR020603">
    <property type="entry name" value="MraZ_dom"/>
</dbReference>
<dbReference type="InterPro" id="IPR035642">
    <property type="entry name" value="MraZ_N"/>
</dbReference>
<dbReference type="InterPro" id="IPR038619">
    <property type="entry name" value="MraZ_sf"/>
</dbReference>
<dbReference type="InterPro" id="IPR007159">
    <property type="entry name" value="SpoVT-AbrB_dom"/>
</dbReference>
<dbReference type="InterPro" id="IPR037914">
    <property type="entry name" value="SpoVT-AbrB_sf"/>
</dbReference>
<dbReference type="NCBIfam" id="TIGR00242">
    <property type="entry name" value="division/cell wall cluster transcriptional repressor MraZ"/>
    <property type="match status" value="1"/>
</dbReference>
<dbReference type="PANTHER" id="PTHR34701">
    <property type="entry name" value="TRANSCRIPTIONAL REGULATOR MRAZ"/>
    <property type="match status" value="1"/>
</dbReference>
<dbReference type="PANTHER" id="PTHR34701:SF1">
    <property type="entry name" value="TRANSCRIPTIONAL REGULATOR MRAZ"/>
    <property type="match status" value="1"/>
</dbReference>
<dbReference type="Pfam" id="PF02381">
    <property type="entry name" value="MraZ"/>
    <property type="match status" value="2"/>
</dbReference>
<dbReference type="SUPFAM" id="SSF89447">
    <property type="entry name" value="AbrB/MazE/MraZ-like"/>
    <property type="match status" value="1"/>
</dbReference>
<dbReference type="PROSITE" id="PS51740">
    <property type="entry name" value="SPOVT_ABRB"/>
    <property type="match status" value="2"/>
</dbReference>
<name>MRAZ_STRM5</name>
<organism>
    <name type="scientific">Stenotrophomonas maltophilia (strain R551-3)</name>
    <dbReference type="NCBI Taxonomy" id="391008"/>
    <lineage>
        <taxon>Bacteria</taxon>
        <taxon>Pseudomonadati</taxon>
        <taxon>Pseudomonadota</taxon>
        <taxon>Gammaproteobacteria</taxon>
        <taxon>Lysobacterales</taxon>
        <taxon>Lysobacteraceae</taxon>
        <taxon>Stenotrophomonas</taxon>
        <taxon>Stenotrophomonas maltophilia group</taxon>
    </lineage>
</organism>
<protein>
    <recommendedName>
        <fullName>Transcriptional regulator MraZ</fullName>
    </recommendedName>
</protein>
<accession>B4SJW7</accession>
<gene>
    <name evidence="1" type="primary">mraZ</name>
    <name type="ordered locus">Smal_0594</name>
</gene>
<evidence type="ECO:0000255" key="1">
    <source>
        <dbReference type="HAMAP-Rule" id="MF_01008"/>
    </source>
</evidence>
<evidence type="ECO:0000255" key="2">
    <source>
        <dbReference type="PROSITE-ProRule" id="PRU01076"/>
    </source>
</evidence>
<comment type="subunit">
    <text evidence="1">Forms oligomers.</text>
</comment>
<comment type="subcellular location">
    <subcellularLocation>
        <location evidence="1">Cytoplasm</location>
        <location evidence="1">Nucleoid</location>
    </subcellularLocation>
</comment>
<comment type="similarity">
    <text evidence="1">Belongs to the MraZ family.</text>
</comment>
<keyword id="KW-0963">Cytoplasm</keyword>
<keyword id="KW-0238">DNA-binding</keyword>
<keyword id="KW-0677">Repeat</keyword>
<keyword id="KW-0804">Transcription</keyword>
<keyword id="KW-0805">Transcription regulation</keyword>
<feature type="chain" id="PRO_1000191337" description="Transcriptional regulator MraZ">
    <location>
        <begin position="1"/>
        <end position="148"/>
    </location>
</feature>
<feature type="domain" description="SpoVT-AbrB 1" evidence="2">
    <location>
        <begin position="5"/>
        <end position="53"/>
    </location>
</feature>
<feature type="domain" description="SpoVT-AbrB 2" evidence="2">
    <location>
        <begin position="82"/>
        <end position="125"/>
    </location>
</feature>